<reference key="1">
    <citation type="journal article" date="2004" name="J. Mol. Evol.">
        <title>Comparative analysis of the complete plastid genome sequence of the red alga Gracilaria tenuistipitata var. liui provides insights into the evolution of rhodoplasts and their relationship to other plastids.</title>
        <authorList>
            <person name="Hagopian J.C."/>
            <person name="Reis M."/>
            <person name="Kitajima J.P."/>
            <person name="Bhattacharya D."/>
            <person name="de Oliveira M.C."/>
        </authorList>
    </citation>
    <scope>NUCLEOTIDE SEQUENCE [LARGE SCALE GENOMIC DNA]</scope>
</reference>
<comment type="function">
    <text evidence="1">Produces ATP from ADP in the presence of a proton gradient across the membrane. The alpha chain is a regulatory subunit.</text>
</comment>
<comment type="catalytic activity">
    <reaction evidence="1">
        <text>ATP + H2O + 4 H(+)(in) = ADP + phosphate + 5 H(+)(out)</text>
        <dbReference type="Rhea" id="RHEA:57720"/>
        <dbReference type="ChEBI" id="CHEBI:15377"/>
        <dbReference type="ChEBI" id="CHEBI:15378"/>
        <dbReference type="ChEBI" id="CHEBI:30616"/>
        <dbReference type="ChEBI" id="CHEBI:43474"/>
        <dbReference type="ChEBI" id="CHEBI:456216"/>
        <dbReference type="EC" id="7.1.2.2"/>
    </reaction>
</comment>
<comment type="subunit">
    <text evidence="1">F-type ATPases have 2 components, CF(1) - the catalytic core - and CF(0) - the membrane proton channel. CF(1) has five subunits: alpha(3), beta(3), gamma(1), delta(1), epsilon(1). CF(0) has four main subunits: a, b, b' and c.</text>
</comment>
<comment type="subcellular location">
    <subcellularLocation>
        <location evidence="1">Plastid</location>
        <location evidence="1">Chloroplast thylakoid membrane</location>
        <topology evidence="1">Peripheral membrane protein</topology>
    </subcellularLocation>
</comment>
<comment type="similarity">
    <text evidence="1">Belongs to the ATPase alpha/beta chains family.</text>
</comment>
<proteinExistence type="inferred from homology"/>
<organism>
    <name type="scientific">Gracilaria tenuistipitata var. liui</name>
    <name type="common">Red alga</name>
    <dbReference type="NCBI Taxonomy" id="285951"/>
    <lineage>
        <taxon>Eukaryota</taxon>
        <taxon>Rhodophyta</taxon>
        <taxon>Florideophyceae</taxon>
        <taxon>Rhodymeniophycidae</taxon>
        <taxon>Gracilariales</taxon>
        <taxon>Gracilariaceae</taxon>
        <taxon>Gracilaria</taxon>
        <taxon>Gracilaria tenuistipitata</taxon>
    </lineage>
</organism>
<keyword id="KW-0066">ATP synthesis</keyword>
<keyword id="KW-0067">ATP-binding</keyword>
<keyword id="KW-0139">CF(1)</keyword>
<keyword id="KW-0150">Chloroplast</keyword>
<keyword id="KW-0375">Hydrogen ion transport</keyword>
<keyword id="KW-0406">Ion transport</keyword>
<keyword id="KW-0472">Membrane</keyword>
<keyword id="KW-0547">Nucleotide-binding</keyword>
<keyword id="KW-0934">Plastid</keyword>
<keyword id="KW-0793">Thylakoid</keyword>
<keyword id="KW-1278">Translocase</keyword>
<keyword id="KW-0813">Transport</keyword>
<name>ATPA_GRATL</name>
<dbReference type="EC" id="7.1.2.2" evidence="1"/>
<dbReference type="EMBL" id="AY673996">
    <property type="protein sequence ID" value="AAT79727.1"/>
    <property type="molecule type" value="Genomic_DNA"/>
</dbReference>
<dbReference type="RefSeq" id="YP_063652.1">
    <property type="nucleotide sequence ID" value="NC_006137.1"/>
</dbReference>
<dbReference type="SMR" id="Q6B8Q8"/>
<dbReference type="GeneID" id="2944028"/>
<dbReference type="GO" id="GO:0009535">
    <property type="term" value="C:chloroplast thylakoid membrane"/>
    <property type="evidence" value="ECO:0007669"/>
    <property type="project" value="UniProtKB-SubCell"/>
</dbReference>
<dbReference type="GO" id="GO:0045259">
    <property type="term" value="C:proton-transporting ATP synthase complex"/>
    <property type="evidence" value="ECO:0007669"/>
    <property type="project" value="UniProtKB-KW"/>
</dbReference>
<dbReference type="GO" id="GO:0043531">
    <property type="term" value="F:ADP binding"/>
    <property type="evidence" value="ECO:0007669"/>
    <property type="project" value="TreeGrafter"/>
</dbReference>
<dbReference type="GO" id="GO:0005524">
    <property type="term" value="F:ATP binding"/>
    <property type="evidence" value="ECO:0007669"/>
    <property type="project" value="UniProtKB-UniRule"/>
</dbReference>
<dbReference type="GO" id="GO:0046933">
    <property type="term" value="F:proton-transporting ATP synthase activity, rotational mechanism"/>
    <property type="evidence" value="ECO:0007669"/>
    <property type="project" value="UniProtKB-UniRule"/>
</dbReference>
<dbReference type="CDD" id="cd18113">
    <property type="entry name" value="ATP-synt_F1_alpha_C"/>
    <property type="match status" value="1"/>
</dbReference>
<dbReference type="CDD" id="cd18116">
    <property type="entry name" value="ATP-synt_F1_alpha_N"/>
    <property type="match status" value="1"/>
</dbReference>
<dbReference type="CDD" id="cd01132">
    <property type="entry name" value="F1-ATPase_alpha_CD"/>
    <property type="match status" value="1"/>
</dbReference>
<dbReference type="FunFam" id="1.20.150.20:FF:000001">
    <property type="entry name" value="ATP synthase subunit alpha"/>
    <property type="match status" value="1"/>
</dbReference>
<dbReference type="FunFam" id="2.40.30.20:FF:000001">
    <property type="entry name" value="ATP synthase subunit alpha"/>
    <property type="match status" value="1"/>
</dbReference>
<dbReference type="FunFam" id="3.40.50.300:FF:000002">
    <property type="entry name" value="ATP synthase subunit alpha"/>
    <property type="match status" value="1"/>
</dbReference>
<dbReference type="Gene3D" id="2.40.30.20">
    <property type="match status" value="1"/>
</dbReference>
<dbReference type="Gene3D" id="1.20.150.20">
    <property type="entry name" value="ATP synthase alpha/beta chain, C-terminal domain"/>
    <property type="match status" value="1"/>
</dbReference>
<dbReference type="Gene3D" id="3.40.50.300">
    <property type="entry name" value="P-loop containing nucleotide triphosphate hydrolases"/>
    <property type="match status" value="1"/>
</dbReference>
<dbReference type="HAMAP" id="MF_01346">
    <property type="entry name" value="ATP_synth_alpha_bact"/>
    <property type="match status" value="1"/>
</dbReference>
<dbReference type="InterPro" id="IPR023366">
    <property type="entry name" value="ATP_synth_asu-like_sf"/>
</dbReference>
<dbReference type="InterPro" id="IPR000793">
    <property type="entry name" value="ATP_synth_asu_C"/>
</dbReference>
<dbReference type="InterPro" id="IPR038376">
    <property type="entry name" value="ATP_synth_asu_C_sf"/>
</dbReference>
<dbReference type="InterPro" id="IPR033732">
    <property type="entry name" value="ATP_synth_F1_a_nt-bd_dom"/>
</dbReference>
<dbReference type="InterPro" id="IPR005294">
    <property type="entry name" value="ATP_synth_F1_asu"/>
</dbReference>
<dbReference type="InterPro" id="IPR020003">
    <property type="entry name" value="ATPase_a/bsu_AS"/>
</dbReference>
<dbReference type="InterPro" id="IPR004100">
    <property type="entry name" value="ATPase_F1/V1/A1_a/bsu_N"/>
</dbReference>
<dbReference type="InterPro" id="IPR036121">
    <property type="entry name" value="ATPase_F1/V1/A1_a/bsu_N_sf"/>
</dbReference>
<dbReference type="InterPro" id="IPR000194">
    <property type="entry name" value="ATPase_F1/V1/A1_a/bsu_nucl-bd"/>
</dbReference>
<dbReference type="InterPro" id="IPR027417">
    <property type="entry name" value="P-loop_NTPase"/>
</dbReference>
<dbReference type="NCBIfam" id="TIGR00962">
    <property type="entry name" value="atpA"/>
    <property type="match status" value="1"/>
</dbReference>
<dbReference type="NCBIfam" id="NF009884">
    <property type="entry name" value="PRK13343.1"/>
    <property type="match status" value="1"/>
</dbReference>
<dbReference type="PANTHER" id="PTHR48082">
    <property type="entry name" value="ATP SYNTHASE SUBUNIT ALPHA, MITOCHONDRIAL"/>
    <property type="match status" value="1"/>
</dbReference>
<dbReference type="PANTHER" id="PTHR48082:SF2">
    <property type="entry name" value="ATP SYNTHASE SUBUNIT ALPHA, MITOCHONDRIAL"/>
    <property type="match status" value="1"/>
</dbReference>
<dbReference type="Pfam" id="PF00006">
    <property type="entry name" value="ATP-synt_ab"/>
    <property type="match status" value="1"/>
</dbReference>
<dbReference type="Pfam" id="PF00306">
    <property type="entry name" value="ATP-synt_ab_C"/>
    <property type="match status" value="1"/>
</dbReference>
<dbReference type="Pfam" id="PF02874">
    <property type="entry name" value="ATP-synt_ab_N"/>
    <property type="match status" value="1"/>
</dbReference>
<dbReference type="PIRSF" id="PIRSF039088">
    <property type="entry name" value="F_ATPase_subunit_alpha"/>
    <property type="match status" value="1"/>
</dbReference>
<dbReference type="SUPFAM" id="SSF47917">
    <property type="entry name" value="C-terminal domain of alpha and beta subunits of F1 ATP synthase"/>
    <property type="match status" value="1"/>
</dbReference>
<dbReference type="SUPFAM" id="SSF50615">
    <property type="entry name" value="N-terminal domain of alpha and beta subunits of F1 ATP synthase"/>
    <property type="match status" value="1"/>
</dbReference>
<dbReference type="SUPFAM" id="SSF52540">
    <property type="entry name" value="P-loop containing nucleoside triphosphate hydrolases"/>
    <property type="match status" value="1"/>
</dbReference>
<dbReference type="PROSITE" id="PS00152">
    <property type="entry name" value="ATPASE_ALPHA_BETA"/>
    <property type="match status" value="1"/>
</dbReference>
<gene>
    <name evidence="1" type="primary">atpA</name>
    <name type="ordered locus">Grc000146</name>
</gene>
<protein>
    <recommendedName>
        <fullName evidence="1">ATP synthase subunit alpha, chloroplastic</fullName>
        <ecNumber evidence="1">7.1.2.2</ecNumber>
    </recommendedName>
    <alternativeName>
        <fullName evidence="1">ATP synthase F1 sector subunit alpha</fullName>
    </alternativeName>
    <alternativeName>
        <fullName evidence="1">F-ATPase subunit alpha</fullName>
    </alternativeName>
</protein>
<feature type="chain" id="PRO_0000238423" description="ATP synthase subunit alpha, chloroplastic">
    <location>
        <begin position="1"/>
        <end position="503"/>
    </location>
</feature>
<feature type="binding site" evidence="1">
    <location>
        <begin position="170"/>
        <end position="177"/>
    </location>
    <ligand>
        <name>ATP</name>
        <dbReference type="ChEBI" id="CHEBI:30616"/>
    </ligand>
</feature>
<feature type="site" description="Required for activity" evidence="1">
    <location>
        <position position="363"/>
    </location>
</feature>
<evidence type="ECO:0000255" key="1">
    <source>
        <dbReference type="HAMAP-Rule" id="MF_01346"/>
    </source>
</evidence>
<sequence>MLNIRPDEISNVIRQQIDKYEQEIQVANIGTVLQVGDGIARVYGLDEVMAGELLEFEDQTIGIALNLESDNVGVVLMGEGRNILEGSSVKATGKIAQIPVGDAFLGRVVDPLARPIDAKGLPNSSGTRLIESYAPGIIGRQSVCEPLQTGITAIDSMIPIGRGQRELIIGDRQTGKTAVALDTIINQKGQDVVCIYVAIGQKASSVAQVVSTLQDESALDYTIVVASNADDPATLQYIAPYTGAALAEYFMYKGKATLVVYDDLTKQAQAYRQMSLLLRRPPGREAYPGDVFYLHSRLLERAAKLNSELGGGSMTALPIIETQAGDVSAYIPTNVISITDGQIFLSGDLFNSGIRPAINVGISVSRVGSAAQIKAMKQVAGKLKLELAQFAELEAFSQFASDLDKATQNQLSRGQRLREILKQAQNSPIPVEEQTAIIYTGINGYLDDINLSQVQEFIEALREDLRNSKPEFGESIRTTKKLSAEAEELLKQSIEDVKQAFSV</sequence>
<accession>Q6B8Q8</accession>
<geneLocation type="chloroplast"/>